<dbReference type="EC" id="2.1.2.10" evidence="1"/>
<dbReference type="EMBL" id="LT708304">
    <property type="protein sequence ID" value="SIU00842.1"/>
    <property type="status" value="ALT_INIT"/>
    <property type="molecule type" value="Genomic_DNA"/>
</dbReference>
<dbReference type="RefSeq" id="NP_855883.1">
    <property type="nucleotide sequence ID" value="NC_002945.3"/>
</dbReference>
<dbReference type="RefSeq" id="WP_003899219.1">
    <property type="nucleotide sequence ID" value="NC_002945.4"/>
</dbReference>
<dbReference type="SMR" id="P64221"/>
<dbReference type="GeneID" id="45426187"/>
<dbReference type="KEGG" id="mbo:BQ2027_MB2234C"/>
<dbReference type="PATRIC" id="fig|233413.5.peg.2450"/>
<dbReference type="Proteomes" id="UP000001419">
    <property type="component" value="Chromosome"/>
</dbReference>
<dbReference type="GO" id="GO:0005829">
    <property type="term" value="C:cytosol"/>
    <property type="evidence" value="ECO:0007669"/>
    <property type="project" value="TreeGrafter"/>
</dbReference>
<dbReference type="GO" id="GO:0005960">
    <property type="term" value="C:glycine cleavage complex"/>
    <property type="evidence" value="ECO:0007669"/>
    <property type="project" value="InterPro"/>
</dbReference>
<dbReference type="GO" id="GO:0004047">
    <property type="term" value="F:aminomethyltransferase activity"/>
    <property type="evidence" value="ECO:0007669"/>
    <property type="project" value="UniProtKB-UniRule"/>
</dbReference>
<dbReference type="GO" id="GO:0008483">
    <property type="term" value="F:transaminase activity"/>
    <property type="evidence" value="ECO:0007669"/>
    <property type="project" value="UniProtKB-KW"/>
</dbReference>
<dbReference type="GO" id="GO:0019464">
    <property type="term" value="P:glycine decarboxylation via glycine cleavage system"/>
    <property type="evidence" value="ECO:0007669"/>
    <property type="project" value="UniProtKB-UniRule"/>
</dbReference>
<dbReference type="FunFam" id="3.30.70.1400:FF:000001">
    <property type="entry name" value="Aminomethyltransferase"/>
    <property type="match status" value="1"/>
</dbReference>
<dbReference type="FunFam" id="4.10.1250.10:FF:000001">
    <property type="entry name" value="Aminomethyltransferase"/>
    <property type="match status" value="1"/>
</dbReference>
<dbReference type="Gene3D" id="2.40.30.110">
    <property type="entry name" value="Aminomethyltransferase beta-barrel domains"/>
    <property type="match status" value="1"/>
</dbReference>
<dbReference type="Gene3D" id="3.30.70.1400">
    <property type="entry name" value="Aminomethyltransferase beta-barrel domains"/>
    <property type="match status" value="1"/>
</dbReference>
<dbReference type="Gene3D" id="4.10.1250.10">
    <property type="entry name" value="Aminomethyltransferase fragment"/>
    <property type="match status" value="1"/>
</dbReference>
<dbReference type="Gene3D" id="3.30.1360.120">
    <property type="entry name" value="Probable tRNA modification gtpase trme, domain 1"/>
    <property type="match status" value="1"/>
</dbReference>
<dbReference type="HAMAP" id="MF_00259">
    <property type="entry name" value="GcvT"/>
    <property type="match status" value="1"/>
</dbReference>
<dbReference type="InterPro" id="IPR006223">
    <property type="entry name" value="GCS_T"/>
</dbReference>
<dbReference type="InterPro" id="IPR022903">
    <property type="entry name" value="GCS_T_bac"/>
</dbReference>
<dbReference type="InterPro" id="IPR013977">
    <property type="entry name" value="GCST_C"/>
</dbReference>
<dbReference type="InterPro" id="IPR006222">
    <property type="entry name" value="GCV_T_N"/>
</dbReference>
<dbReference type="InterPro" id="IPR028896">
    <property type="entry name" value="GcvT/YgfZ/DmdA"/>
</dbReference>
<dbReference type="InterPro" id="IPR029043">
    <property type="entry name" value="GcvT/YgfZ_C"/>
</dbReference>
<dbReference type="InterPro" id="IPR027266">
    <property type="entry name" value="TrmE/GcvT_dom1"/>
</dbReference>
<dbReference type="NCBIfam" id="TIGR00528">
    <property type="entry name" value="gcvT"/>
    <property type="match status" value="1"/>
</dbReference>
<dbReference type="NCBIfam" id="NF001567">
    <property type="entry name" value="PRK00389.1"/>
    <property type="match status" value="1"/>
</dbReference>
<dbReference type="PANTHER" id="PTHR43757">
    <property type="entry name" value="AMINOMETHYLTRANSFERASE"/>
    <property type="match status" value="1"/>
</dbReference>
<dbReference type="PANTHER" id="PTHR43757:SF2">
    <property type="entry name" value="AMINOMETHYLTRANSFERASE, MITOCHONDRIAL"/>
    <property type="match status" value="1"/>
</dbReference>
<dbReference type="Pfam" id="PF01571">
    <property type="entry name" value="GCV_T"/>
    <property type="match status" value="1"/>
</dbReference>
<dbReference type="Pfam" id="PF08669">
    <property type="entry name" value="GCV_T_C"/>
    <property type="match status" value="1"/>
</dbReference>
<dbReference type="PIRSF" id="PIRSF006487">
    <property type="entry name" value="GcvT"/>
    <property type="match status" value="1"/>
</dbReference>
<dbReference type="SUPFAM" id="SSF101790">
    <property type="entry name" value="Aminomethyltransferase beta-barrel domain"/>
    <property type="match status" value="1"/>
</dbReference>
<dbReference type="SUPFAM" id="SSF103025">
    <property type="entry name" value="Folate-binding domain"/>
    <property type="match status" value="1"/>
</dbReference>
<name>GCST_MYCBO</name>
<feature type="chain" id="PRO_0000122571" description="Aminomethyltransferase">
    <location>
        <begin position="1"/>
        <end position="367"/>
    </location>
</feature>
<organism>
    <name type="scientific">Mycobacterium bovis (strain ATCC BAA-935 / AF2122/97)</name>
    <dbReference type="NCBI Taxonomy" id="233413"/>
    <lineage>
        <taxon>Bacteria</taxon>
        <taxon>Bacillati</taxon>
        <taxon>Actinomycetota</taxon>
        <taxon>Actinomycetes</taxon>
        <taxon>Mycobacteriales</taxon>
        <taxon>Mycobacteriaceae</taxon>
        <taxon>Mycobacterium</taxon>
        <taxon>Mycobacterium tuberculosis complex</taxon>
    </lineage>
</organism>
<reference key="1">
    <citation type="journal article" date="2003" name="Proc. Natl. Acad. Sci. U.S.A.">
        <title>The complete genome sequence of Mycobacterium bovis.</title>
        <authorList>
            <person name="Garnier T."/>
            <person name="Eiglmeier K."/>
            <person name="Camus J.-C."/>
            <person name="Medina N."/>
            <person name="Mansoor H."/>
            <person name="Pryor M."/>
            <person name="Duthoy S."/>
            <person name="Grondin S."/>
            <person name="Lacroix C."/>
            <person name="Monsempe C."/>
            <person name="Simon S."/>
            <person name="Harris B."/>
            <person name="Atkin R."/>
            <person name="Doggett J."/>
            <person name="Mayes R."/>
            <person name="Keating L."/>
            <person name="Wheeler P.R."/>
            <person name="Parkhill J."/>
            <person name="Barrell B.G."/>
            <person name="Cole S.T."/>
            <person name="Gordon S.V."/>
            <person name="Hewinson R.G."/>
        </authorList>
    </citation>
    <scope>NUCLEOTIDE SEQUENCE [LARGE SCALE GENOMIC DNA]</scope>
    <source>
        <strain>ATCC BAA-935 / AF2122/97</strain>
    </source>
</reference>
<reference key="2">
    <citation type="journal article" date="2017" name="Genome Announc.">
        <title>Updated reference genome sequence and annotation of Mycobacterium bovis AF2122/97.</title>
        <authorList>
            <person name="Malone K.M."/>
            <person name="Farrell D."/>
            <person name="Stuber T.P."/>
            <person name="Schubert O.T."/>
            <person name="Aebersold R."/>
            <person name="Robbe-Austerman S."/>
            <person name="Gordon S.V."/>
        </authorList>
    </citation>
    <scope>NUCLEOTIDE SEQUENCE [LARGE SCALE GENOMIC DNA]</scope>
    <scope>GENOME REANNOTATION</scope>
    <source>
        <strain>ATCC BAA-935 / AF2122/97</strain>
    </source>
</reference>
<evidence type="ECO:0000255" key="1">
    <source>
        <dbReference type="HAMAP-Rule" id="MF_00259"/>
    </source>
</evidence>
<evidence type="ECO:0000305" key="2"/>
<proteinExistence type="inferred from homology"/>
<protein>
    <recommendedName>
        <fullName evidence="1">Aminomethyltransferase</fullName>
        <ecNumber evidence="1">2.1.2.10</ecNumber>
    </recommendedName>
    <alternativeName>
        <fullName evidence="1">Glycine cleavage system T protein</fullName>
    </alternativeName>
</protein>
<accession>P64221</accession>
<accession>A0A1R3Y0K3</accession>
<accession>Q10376</accession>
<accession>X2BKG2</accession>
<keyword id="KW-0032">Aminotransferase</keyword>
<keyword id="KW-1185">Reference proteome</keyword>
<keyword id="KW-0808">Transferase</keyword>
<comment type="function">
    <text evidence="1">The glycine cleavage system catalyzes the degradation of glycine.</text>
</comment>
<comment type="catalytic activity">
    <reaction evidence="1">
        <text>N(6)-[(R)-S(8)-aminomethyldihydrolipoyl]-L-lysyl-[protein] + (6S)-5,6,7,8-tetrahydrofolate = N(6)-[(R)-dihydrolipoyl]-L-lysyl-[protein] + (6R)-5,10-methylene-5,6,7,8-tetrahydrofolate + NH4(+)</text>
        <dbReference type="Rhea" id="RHEA:16945"/>
        <dbReference type="Rhea" id="RHEA-COMP:10475"/>
        <dbReference type="Rhea" id="RHEA-COMP:10492"/>
        <dbReference type="ChEBI" id="CHEBI:15636"/>
        <dbReference type="ChEBI" id="CHEBI:28938"/>
        <dbReference type="ChEBI" id="CHEBI:57453"/>
        <dbReference type="ChEBI" id="CHEBI:83100"/>
        <dbReference type="ChEBI" id="CHEBI:83143"/>
        <dbReference type="EC" id="2.1.2.10"/>
    </reaction>
</comment>
<comment type="subunit">
    <text evidence="1">The glycine cleavage system is composed of four proteins: P, T, L and H.</text>
</comment>
<comment type="similarity">
    <text evidence="1">Belongs to the GcvT family.</text>
</comment>
<comment type="sequence caution" evidence="2">
    <conflict type="erroneous initiation">
        <sequence resource="EMBL-CDS" id="SIU00842"/>
    </conflict>
    <text>Extended N-terminus.</text>
</comment>
<sequence length="367" mass="38318">MSDVPELIHGPLEDRHRELGASFAEFGGWLMPVSYAGTVSEHNATRTAVGLFDVSHLGKALVRGPGAAQFVNSALTNDLGRIGPGKAQYTLCCTESGGVIDDLIAYYVSDDEIFLVPNAANTAAVVGALQAAAPGGLSITNLHRSYAVLAVQGPCSTDVLTALGLPTEMDYMGYADASYSGVPVRVCRTGYTGEHGYELLPPWESAGVVFDALLAAVSAAGGEPAGLGARDTLRTEMGYPLHGHELSLDISPLQARCGWAVGWRKDAFFGRAALLAEKAAGPRRLLRGLRMVGRGVLRPGLAVLVGDETVGVTTSGTFSPTLQVGIGLALIDSDAGIEDGQQINVDVRGRAVECQVVCPPFVAVKTR</sequence>
<gene>
    <name evidence="1" type="primary">gcvT</name>
    <name type="ordered locus">BQ2027_MB2234C</name>
</gene>